<organism>
    <name type="scientific">Campylobacter jejuni subsp. jejuni serotype O:6 (strain 81116 / NCTC 11828)</name>
    <dbReference type="NCBI Taxonomy" id="407148"/>
    <lineage>
        <taxon>Bacteria</taxon>
        <taxon>Pseudomonadati</taxon>
        <taxon>Campylobacterota</taxon>
        <taxon>Epsilonproteobacteria</taxon>
        <taxon>Campylobacterales</taxon>
        <taxon>Campylobacteraceae</taxon>
        <taxon>Campylobacter</taxon>
    </lineage>
</organism>
<comment type="catalytic activity">
    <reaction evidence="1">
        <text>D-arabinose 5-phosphate + phosphoenolpyruvate + H2O = 3-deoxy-alpha-D-manno-2-octulosonate-8-phosphate + phosphate</text>
        <dbReference type="Rhea" id="RHEA:14053"/>
        <dbReference type="ChEBI" id="CHEBI:15377"/>
        <dbReference type="ChEBI" id="CHEBI:43474"/>
        <dbReference type="ChEBI" id="CHEBI:57693"/>
        <dbReference type="ChEBI" id="CHEBI:58702"/>
        <dbReference type="ChEBI" id="CHEBI:85985"/>
        <dbReference type="EC" id="2.5.1.55"/>
    </reaction>
</comment>
<comment type="pathway">
    <text evidence="1">Carbohydrate biosynthesis; 3-deoxy-D-manno-octulosonate biosynthesis; 3-deoxy-D-manno-octulosonate from D-ribulose 5-phosphate: step 2/3.</text>
</comment>
<comment type="pathway">
    <text evidence="1">Bacterial outer membrane biogenesis; lipopolysaccharide biosynthesis.</text>
</comment>
<comment type="subcellular location">
    <subcellularLocation>
        <location evidence="1">Cytoplasm</location>
    </subcellularLocation>
</comment>
<comment type="similarity">
    <text evidence="1">Belongs to the KdsA family.</text>
</comment>
<protein>
    <recommendedName>
        <fullName evidence="1">2-dehydro-3-deoxyphosphooctonate aldolase</fullName>
        <ecNumber evidence="1">2.5.1.55</ecNumber>
    </recommendedName>
    <alternativeName>
        <fullName evidence="1">3-deoxy-D-manno-octulosonic acid 8-phosphate synthase</fullName>
    </alternativeName>
    <alternativeName>
        <fullName evidence="1">KDO-8-phosphate synthase</fullName>
        <shortName evidence="1">KDO 8-P synthase</shortName>
        <shortName evidence="1">KDOPS</shortName>
    </alternativeName>
    <alternativeName>
        <fullName evidence="1">Phospho-2-dehydro-3-deoxyoctonate aldolase</fullName>
    </alternativeName>
</protein>
<reference key="1">
    <citation type="journal article" date="2007" name="J. Bacteriol.">
        <title>The complete genome sequence of Campylobacter jejuni strain 81116 (NCTC11828).</title>
        <authorList>
            <person name="Pearson B.M."/>
            <person name="Gaskin D.J.H."/>
            <person name="Segers R.P.A.M."/>
            <person name="Wells J.M."/>
            <person name="Nuijten P.J.M."/>
            <person name="van Vliet A.H.M."/>
        </authorList>
    </citation>
    <scope>NUCLEOTIDE SEQUENCE [LARGE SCALE GENOMIC DNA]</scope>
    <source>
        <strain>81116 / NCTC 11828</strain>
    </source>
</reference>
<evidence type="ECO:0000255" key="1">
    <source>
        <dbReference type="HAMAP-Rule" id="MF_00056"/>
    </source>
</evidence>
<name>KDSA_CAMJ8</name>
<keyword id="KW-0963">Cytoplasm</keyword>
<keyword id="KW-0448">Lipopolysaccharide biosynthesis</keyword>
<keyword id="KW-0808">Transferase</keyword>
<feature type="chain" id="PRO_1000071153" description="2-dehydro-3-deoxyphosphooctonate aldolase">
    <location>
        <begin position="1"/>
        <end position="271"/>
    </location>
</feature>
<gene>
    <name evidence="1" type="primary">kdsA</name>
    <name type="ordered locus">C8J_0359</name>
</gene>
<sequence>MKKMILIAGPCVIESKDLIFKVAEQLKNFNENPNIEFYFKSSFDKANRTSINSFRGPGLEEGLKILQSVKDEFGMKILTDIHESNQAAAVSEVADVLQIPAFLCRQTDLLVAAAKTKAKVNIKKGQFLNPSDIKYSVKKVLQTRGIEDEGYEAAQKNGVFVAERGASFGYGNLVVDMRSLVIMREFAPVIFDATHSVQMPGAAGGSSGGKSEFVEPLARAAAAVGIDGFFFETHINPCEALCDGPNMLNLTRLKNCVNTLLEIQNIIKENK</sequence>
<proteinExistence type="inferred from homology"/>
<dbReference type="EC" id="2.5.1.55" evidence="1"/>
<dbReference type="EMBL" id="CP000814">
    <property type="protein sequence ID" value="ABV51958.1"/>
    <property type="molecule type" value="Genomic_DNA"/>
</dbReference>
<dbReference type="RefSeq" id="WP_002877513.1">
    <property type="nucleotide sequence ID" value="NC_009839.1"/>
</dbReference>
<dbReference type="SMR" id="A8FKH1"/>
<dbReference type="KEGG" id="cju:C8J_0359"/>
<dbReference type="HOGENOM" id="CLU_036666_0_0_7"/>
<dbReference type="UniPathway" id="UPA00030"/>
<dbReference type="UniPathway" id="UPA00357">
    <property type="reaction ID" value="UER00474"/>
</dbReference>
<dbReference type="GO" id="GO:0005737">
    <property type="term" value="C:cytoplasm"/>
    <property type="evidence" value="ECO:0007669"/>
    <property type="project" value="UniProtKB-SubCell"/>
</dbReference>
<dbReference type="GO" id="GO:0008676">
    <property type="term" value="F:3-deoxy-8-phosphooctulonate synthase activity"/>
    <property type="evidence" value="ECO:0007669"/>
    <property type="project" value="UniProtKB-UniRule"/>
</dbReference>
<dbReference type="GO" id="GO:0019294">
    <property type="term" value="P:keto-3-deoxy-D-manno-octulosonic acid biosynthetic process"/>
    <property type="evidence" value="ECO:0007669"/>
    <property type="project" value="UniProtKB-UniRule"/>
</dbReference>
<dbReference type="Gene3D" id="3.20.20.70">
    <property type="entry name" value="Aldolase class I"/>
    <property type="match status" value="1"/>
</dbReference>
<dbReference type="HAMAP" id="MF_00056">
    <property type="entry name" value="KDO8P_synth"/>
    <property type="match status" value="1"/>
</dbReference>
<dbReference type="InterPro" id="IPR013785">
    <property type="entry name" value="Aldolase_TIM"/>
</dbReference>
<dbReference type="InterPro" id="IPR006218">
    <property type="entry name" value="DAHP1/KDSA"/>
</dbReference>
<dbReference type="InterPro" id="IPR006269">
    <property type="entry name" value="KDO8P_synthase"/>
</dbReference>
<dbReference type="NCBIfam" id="TIGR01362">
    <property type="entry name" value="KDO8P_synth"/>
    <property type="match status" value="1"/>
</dbReference>
<dbReference type="NCBIfam" id="NF003543">
    <property type="entry name" value="PRK05198.1"/>
    <property type="match status" value="1"/>
</dbReference>
<dbReference type="PANTHER" id="PTHR21057">
    <property type="entry name" value="PHOSPHO-2-DEHYDRO-3-DEOXYHEPTONATE ALDOLASE"/>
    <property type="match status" value="1"/>
</dbReference>
<dbReference type="Pfam" id="PF00793">
    <property type="entry name" value="DAHP_synth_1"/>
    <property type="match status" value="1"/>
</dbReference>
<dbReference type="SUPFAM" id="SSF51569">
    <property type="entry name" value="Aldolase"/>
    <property type="match status" value="1"/>
</dbReference>
<accession>A8FKH1</accession>